<keyword id="KW-0004">4Fe-4S</keyword>
<keyword id="KW-0997">Cell inner membrane</keyword>
<keyword id="KW-1003">Cell membrane</keyword>
<keyword id="KW-0408">Iron</keyword>
<keyword id="KW-0411">Iron-sulfur</keyword>
<keyword id="KW-0472">Membrane</keyword>
<keyword id="KW-0479">Metal-binding</keyword>
<keyword id="KW-0520">NAD</keyword>
<keyword id="KW-0874">Quinone</keyword>
<keyword id="KW-1278">Translocase</keyword>
<keyword id="KW-0813">Transport</keyword>
<keyword id="KW-0830">Ubiquinone</keyword>
<comment type="function">
    <text evidence="1">NDH-1 shuttles electrons from NADH, via FMN and iron-sulfur (Fe-S) centers, to quinones in the respiratory chain. The immediate electron acceptor for the enzyme in this species is believed to be ubiquinone. Couples the redox reaction to proton translocation (for every two electrons transferred, four hydrogen ions are translocated across the cytoplasmic membrane), and thus conserves the redox energy in a proton gradient.</text>
</comment>
<comment type="catalytic activity">
    <reaction evidence="1">
        <text>a quinone + NADH + 5 H(+)(in) = a quinol + NAD(+) + 4 H(+)(out)</text>
        <dbReference type="Rhea" id="RHEA:57888"/>
        <dbReference type="ChEBI" id="CHEBI:15378"/>
        <dbReference type="ChEBI" id="CHEBI:24646"/>
        <dbReference type="ChEBI" id="CHEBI:57540"/>
        <dbReference type="ChEBI" id="CHEBI:57945"/>
        <dbReference type="ChEBI" id="CHEBI:132124"/>
    </reaction>
</comment>
<comment type="cofactor">
    <cofactor evidence="1">
        <name>[4Fe-4S] cluster</name>
        <dbReference type="ChEBI" id="CHEBI:49883"/>
    </cofactor>
    <text evidence="1">Binds 1 [4Fe-4S] cluster.</text>
</comment>
<comment type="subunit">
    <text evidence="1">NDH-1 is composed of 14 different subunits. Subunits NuoB, C, D, E, F, and G constitute the peripheral sector of the complex.</text>
</comment>
<comment type="subcellular location">
    <subcellularLocation>
        <location evidence="1">Cell inner membrane</location>
        <topology evidence="1">Peripheral membrane protein</topology>
        <orientation evidence="1">Cytoplasmic side</orientation>
    </subcellularLocation>
</comment>
<comment type="similarity">
    <text evidence="1">Belongs to the complex I 20 kDa subunit family.</text>
</comment>
<comment type="sequence caution" evidence="2">
    <conflict type="erroneous initiation">
        <sequence resource="EMBL-CDS" id="BAE69821"/>
    </conflict>
</comment>
<feature type="chain" id="PRO_0000376405" description="NADH-quinone oxidoreductase subunit B">
    <location>
        <begin position="1"/>
        <end position="184"/>
    </location>
</feature>
<feature type="binding site" evidence="1">
    <location>
        <position position="63"/>
    </location>
    <ligand>
        <name>[4Fe-4S] cluster</name>
        <dbReference type="ChEBI" id="CHEBI:49883"/>
    </ligand>
</feature>
<feature type="binding site" evidence="1">
    <location>
        <position position="64"/>
    </location>
    <ligand>
        <name>[4Fe-4S] cluster</name>
        <dbReference type="ChEBI" id="CHEBI:49883"/>
    </ligand>
</feature>
<feature type="binding site" evidence="1">
    <location>
        <position position="128"/>
    </location>
    <ligand>
        <name>[4Fe-4S] cluster</name>
        <dbReference type="ChEBI" id="CHEBI:49883"/>
    </ligand>
</feature>
<feature type="binding site" evidence="1">
    <location>
        <position position="158"/>
    </location>
    <ligand>
        <name>[4Fe-4S] cluster</name>
        <dbReference type="ChEBI" id="CHEBI:49883"/>
    </ligand>
</feature>
<reference key="1">
    <citation type="journal article" date="2005" name="Jpn. Agric. Res. Q.">
        <title>Genome sequence of Xanthomonas oryzae pv. oryzae suggests contribution of large numbers of effector genes and insertion sequences to its race diversity.</title>
        <authorList>
            <person name="Ochiai H."/>
            <person name="Inoue Y."/>
            <person name="Takeya M."/>
            <person name="Sasaki A."/>
            <person name="Kaku H."/>
        </authorList>
    </citation>
    <scope>NUCLEOTIDE SEQUENCE [LARGE SCALE GENOMIC DNA]</scope>
    <source>
        <strain>MAFF 311018</strain>
    </source>
</reference>
<protein>
    <recommendedName>
        <fullName evidence="1">NADH-quinone oxidoreductase subunit B</fullName>
        <ecNumber evidence="1">7.1.1.-</ecNumber>
    </recommendedName>
    <alternativeName>
        <fullName evidence="1">NADH dehydrogenase I subunit B</fullName>
    </alternativeName>
    <alternativeName>
        <fullName evidence="1">NDH-1 subunit B</fullName>
    </alternativeName>
</protein>
<proteinExistence type="inferred from homology"/>
<evidence type="ECO:0000255" key="1">
    <source>
        <dbReference type="HAMAP-Rule" id="MF_01356"/>
    </source>
</evidence>
<evidence type="ECO:0000305" key="2"/>
<organism>
    <name type="scientific">Xanthomonas oryzae pv. oryzae (strain MAFF 311018)</name>
    <dbReference type="NCBI Taxonomy" id="342109"/>
    <lineage>
        <taxon>Bacteria</taxon>
        <taxon>Pseudomonadati</taxon>
        <taxon>Pseudomonadota</taxon>
        <taxon>Gammaproteobacteria</taxon>
        <taxon>Lysobacterales</taxon>
        <taxon>Lysobacteraceae</taxon>
        <taxon>Xanthomonas</taxon>
    </lineage>
</organism>
<name>NUOB_XANOM</name>
<dbReference type="EC" id="7.1.1.-" evidence="1"/>
<dbReference type="EMBL" id="AP008229">
    <property type="protein sequence ID" value="BAE69821.1"/>
    <property type="status" value="ALT_INIT"/>
    <property type="molecule type" value="Genomic_DNA"/>
</dbReference>
<dbReference type="RefSeq" id="WP_010371165.1">
    <property type="nucleotide sequence ID" value="NC_007705.1"/>
</dbReference>
<dbReference type="SMR" id="Q2P0V6"/>
<dbReference type="KEGG" id="xom:XOO3066"/>
<dbReference type="HOGENOM" id="CLU_055737_7_3_6"/>
<dbReference type="GO" id="GO:0005886">
    <property type="term" value="C:plasma membrane"/>
    <property type="evidence" value="ECO:0007669"/>
    <property type="project" value="UniProtKB-SubCell"/>
</dbReference>
<dbReference type="GO" id="GO:0045271">
    <property type="term" value="C:respiratory chain complex I"/>
    <property type="evidence" value="ECO:0007669"/>
    <property type="project" value="TreeGrafter"/>
</dbReference>
<dbReference type="GO" id="GO:0051539">
    <property type="term" value="F:4 iron, 4 sulfur cluster binding"/>
    <property type="evidence" value="ECO:0007669"/>
    <property type="project" value="UniProtKB-KW"/>
</dbReference>
<dbReference type="GO" id="GO:0005506">
    <property type="term" value="F:iron ion binding"/>
    <property type="evidence" value="ECO:0007669"/>
    <property type="project" value="UniProtKB-UniRule"/>
</dbReference>
<dbReference type="GO" id="GO:0008137">
    <property type="term" value="F:NADH dehydrogenase (ubiquinone) activity"/>
    <property type="evidence" value="ECO:0007669"/>
    <property type="project" value="InterPro"/>
</dbReference>
<dbReference type="GO" id="GO:0050136">
    <property type="term" value="F:NADH:ubiquinone reductase (non-electrogenic) activity"/>
    <property type="evidence" value="ECO:0007669"/>
    <property type="project" value="UniProtKB-UniRule"/>
</dbReference>
<dbReference type="GO" id="GO:0048038">
    <property type="term" value="F:quinone binding"/>
    <property type="evidence" value="ECO:0007669"/>
    <property type="project" value="UniProtKB-KW"/>
</dbReference>
<dbReference type="GO" id="GO:0009060">
    <property type="term" value="P:aerobic respiration"/>
    <property type="evidence" value="ECO:0007669"/>
    <property type="project" value="TreeGrafter"/>
</dbReference>
<dbReference type="GO" id="GO:0015990">
    <property type="term" value="P:electron transport coupled proton transport"/>
    <property type="evidence" value="ECO:0007669"/>
    <property type="project" value="TreeGrafter"/>
</dbReference>
<dbReference type="FunFam" id="3.40.50.12280:FF:000001">
    <property type="entry name" value="NADH-quinone oxidoreductase subunit B 2"/>
    <property type="match status" value="1"/>
</dbReference>
<dbReference type="Gene3D" id="3.40.50.12280">
    <property type="match status" value="1"/>
</dbReference>
<dbReference type="HAMAP" id="MF_01356">
    <property type="entry name" value="NDH1_NuoB"/>
    <property type="match status" value="1"/>
</dbReference>
<dbReference type="InterPro" id="IPR006137">
    <property type="entry name" value="NADH_UbQ_OxRdtase-like_20kDa"/>
</dbReference>
<dbReference type="InterPro" id="IPR006138">
    <property type="entry name" value="NADH_UQ_OxRdtase_20Kd_su"/>
</dbReference>
<dbReference type="NCBIfam" id="TIGR01957">
    <property type="entry name" value="nuoB_fam"/>
    <property type="match status" value="1"/>
</dbReference>
<dbReference type="NCBIfam" id="NF005012">
    <property type="entry name" value="PRK06411.1"/>
    <property type="match status" value="1"/>
</dbReference>
<dbReference type="PANTHER" id="PTHR11995">
    <property type="entry name" value="NADH DEHYDROGENASE"/>
    <property type="match status" value="1"/>
</dbReference>
<dbReference type="PANTHER" id="PTHR11995:SF14">
    <property type="entry name" value="NADH DEHYDROGENASE [UBIQUINONE] IRON-SULFUR PROTEIN 7, MITOCHONDRIAL"/>
    <property type="match status" value="1"/>
</dbReference>
<dbReference type="Pfam" id="PF01058">
    <property type="entry name" value="Oxidored_q6"/>
    <property type="match status" value="1"/>
</dbReference>
<dbReference type="SUPFAM" id="SSF56770">
    <property type="entry name" value="HydA/Nqo6-like"/>
    <property type="match status" value="1"/>
</dbReference>
<dbReference type="PROSITE" id="PS01150">
    <property type="entry name" value="COMPLEX1_20K"/>
    <property type="match status" value="1"/>
</dbReference>
<gene>
    <name evidence="1" type="primary">nuoB</name>
    <name type="ordered locus">XOO3066</name>
</gene>
<sequence length="184" mass="20444">MGVIQTLDRLMTNPMPEGRVEDILRPEGENPLLEKGYVTTSVDALLNWARTGSMWPMTFGLACCAVEMMHAGASRLDLDRYGVVFRPSPRQSDVMIVAGTLVNKMAPALRKVYDQMPDPKWVISMGSCANGGGYYHYSYSVVRGCDRIVPVDIYVPGCPPTAEALVYGILQLQKKIWRTQTIAR</sequence>
<accession>Q2P0V6</accession>